<proteinExistence type="inferred from homology"/>
<dbReference type="EC" id="5.4.2.12" evidence="1"/>
<dbReference type="EMBL" id="CP000099">
    <property type="protein sequence ID" value="AAZ70190.1"/>
    <property type="molecule type" value="Genomic_DNA"/>
</dbReference>
<dbReference type="SMR" id="Q46D52"/>
<dbReference type="STRING" id="269797.Mbar_A1223"/>
<dbReference type="PaxDb" id="269797-Mbar_A1223"/>
<dbReference type="KEGG" id="mba:Mbar_A1223"/>
<dbReference type="eggNOG" id="arCOG03068">
    <property type="taxonomic scope" value="Archaea"/>
</dbReference>
<dbReference type="HOGENOM" id="CLU_026099_2_0_2"/>
<dbReference type="UniPathway" id="UPA00109">
    <property type="reaction ID" value="UER00186"/>
</dbReference>
<dbReference type="GO" id="GO:0005737">
    <property type="term" value="C:cytoplasm"/>
    <property type="evidence" value="ECO:0007669"/>
    <property type="project" value="InterPro"/>
</dbReference>
<dbReference type="GO" id="GO:0030145">
    <property type="term" value="F:manganese ion binding"/>
    <property type="evidence" value="ECO:0007669"/>
    <property type="project" value="UniProtKB-UniRule"/>
</dbReference>
<dbReference type="GO" id="GO:0004619">
    <property type="term" value="F:phosphoglycerate mutase activity"/>
    <property type="evidence" value="ECO:0007669"/>
    <property type="project" value="UniProtKB-EC"/>
</dbReference>
<dbReference type="GO" id="GO:0006007">
    <property type="term" value="P:glucose catabolic process"/>
    <property type="evidence" value="ECO:0007669"/>
    <property type="project" value="InterPro"/>
</dbReference>
<dbReference type="GO" id="GO:0006096">
    <property type="term" value="P:glycolytic process"/>
    <property type="evidence" value="ECO:0007669"/>
    <property type="project" value="UniProtKB-UniRule"/>
</dbReference>
<dbReference type="CDD" id="cd16010">
    <property type="entry name" value="iPGM"/>
    <property type="match status" value="1"/>
</dbReference>
<dbReference type="FunFam" id="3.40.1450.10:FF:000001">
    <property type="entry name" value="2,3-bisphosphoglycerate-independent phosphoglycerate mutase"/>
    <property type="match status" value="1"/>
</dbReference>
<dbReference type="Gene3D" id="3.40.720.10">
    <property type="entry name" value="Alkaline Phosphatase, subunit A"/>
    <property type="match status" value="1"/>
</dbReference>
<dbReference type="Gene3D" id="3.40.1450.10">
    <property type="entry name" value="BPG-independent phosphoglycerate mutase, domain B"/>
    <property type="match status" value="1"/>
</dbReference>
<dbReference type="HAMAP" id="MF_01038">
    <property type="entry name" value="GpmI"/>
    <property type="match status" value="1"/>
</dbReference>
<dbReference type="InterPro" id="IPR017850">
    <property type="entry name" value="Alkaline_phosphatase_core_sf"/>
</dbReference>
<dbReference type="InterPro" id="IPR011258">
    <property type="entry name" value="BPG-indep_PGM_N"/>
</dbReference>
<dbReference type="InterPro" id="IPR006124">
    <property type="entry name" value="Metalloenzyme"/>
</dbReference>
<dbReference type="InterPro" id="IPR036646">
    <property type="entry name" value="PGAM_B_sf"/>
</dbReference>
<dbReference type="InterPro" id="IPR005995">
    <property type="entry name" value="Pgm_bpd_ind"/>
</dbReference>
<dbReference type="NCBIfam" id="TIGR01307">
    <property type="entry name" value="pgm_bpd_ind"/>
    <property type="match status" value="1"/>
</dbReference>
<dbReference type="PANTHER" id="PTHR31637">
    <property type="entry name" value="2,3-BISPHOSPHOGLYCERATE-INDEPENDENT PHOSPHOGLYCERATE MUTASE"/>
    <property type="match status" value="1"/>
</dbReference>
<dbReference type="PANTHER" id="PTHR31637:SF0">
    <property type="entry name" value="2,3-BISPHOSPHOGLYCERATE-INDEPENDENT PHOSPHOGLYCERATE MUTASE"/>
    <property type="match status" value="1"/>
</dbReference>
<dbReference type="Pfam" id="PF06415">
    <property type="entry name" value="iPGM_N"/>
    <property type="match status" value="1"/>
</dbReference>
<dbReference type="Pfam" id="PF01676">
    <property type="entry name" value="Metalloenzyme"/>
    <property type="match status" value="1"/>
</dbReference>
<dbReference type="PIRSF" id="PIRSF001492">
    <property type="entry name" value="IPGAM"/>
    <property type="match status" value="1"/>
</dbReference>
<dbReference type="SUPFAM" id="SSF64158">
    <property type="entry name" value="2,3-Bisphosphoglycerate-independent phosphoglycerate mutase, substrate-binding domain"/>
    <property type="match status" value="1"/>
</dbReference>
<dbReference type="SUPFAM" id="SSF53649">
    <property type="entry name" value="Alkaline phosphatase-like"/>
    <property type="match status" value="1"/>
</dbReference>
<keyword id="KW-0324">Glycolysis</keyword>
<keyword id="KW-0413">Isomerase</keyword>
<keyword id="KW-0464">Manganese</keyword>
<keyword id="KW-0479">Metal-binding</keyword>
<gene>
    <name evidence="1" type="primary">gpmI1</name>
    <name type="ordered locus">Mbar_A1223</name>
</gene>
<organism>
    <name type="scientific">Methanosarcina barkeri (strain Fusaro / DSM 804)</name>
    <dbReference type="NCBI Taxonomy" id="269797"/>
    <lineage>
        <taxon>Archaea</taxon>
        <taxon>Methanobacteriati</taxon>
        <taxon>Methanobacteriota</taxon>
        <taxon>Stenosarchaea group</taxon>
        <taxon>Methanomicrobia</taxon>
        <taxon>Methanosarcinales</taxon>
        <taxon>Methanosarcinaceae</taxon>
        <taxon>Methanosarcina</taxon>
    </lineage>
</organism>
<comment type="function">
    <text evidence="1">Catalyzes the interconversion of 2-phosphoglycerate and 3-phosphoglycerate.</text>
</comment>
<comment type="catalytic activity">
    <reaction evidence="1">
        <text>(2R)-2-phosphoglycerate = (2R)-3-phosphoglycerate</text>
        <dbReference type="Rhea" id="RHEA:15901"/>
        <dbReference type="ChEBI" id="CHEBI:58272"/>
        <dbReference type="ChEBI" id="CHEBI:58289"/>
        <dbReference type="EC" id="5.4.2.12"/>
    </reaction>
</comment>
<comment type="cofactor">
    <cofactor evidence="1">
        <name>Mn(2+)</name>
        <dbReference type="ChEBI" id="CHEBI:29035"/>
    </cofactor>
    <text evidence="1">Binds 2 manganese ions per subunit.</text>
</comment>
<comment type="pathway">
    <text evidence="1">Carbohydrate degradation; glycolysis; pyruvate from D-glyceraldehyde 3-phosphate: step 3/5.</text>
</comment>
<comment type="similarity">
    <text evidence="1">Belongs to the BPG-independent phosphoglycerate mutase family.</text>
</comment>
<protein>
    <recommendedName>
        <fullName evidence="1">2,3-bisphosphoglycerate-independent phosphoglycerate mutase 1</fullName>
        <shortName evidence="1">BPG-independent PGAM 1</shortName>
        <shortName evidence="1">Phosphoglyceromutase 1</shortName>
        <shortName evidence="1">iPGM 1</shortName>
        <ecNumber evidence="1">5.4.2.12</ecNumber>
    </recommendedName>
</protein>
<accession>Q46D52</accession>
<evidence type="ECO:0000255" key="1">
    <source>
        <dbReference type="HAMAP-Rule" id="MF_01038"/>
    </source>
</evidence>
<reference key="1">
    <citation type="journal article" date="2006" name="J. Bacteriol.">
        <title>The Methanosarcina barkeri genome: comparative analysis with Methanosarcina acetivorans and Methanosarcina mazei reveals extensive rearrangement within methanosarcinal genomes.</title>
        <authorList>
            <person name="Maeder D.L."/>
            <person name="Anderson I."/>
            <person name="Brettin T.S."/>
            <person name="Bruce D.C."/>
            <person name="Gilna P."/>
            <person name="Han C.S."/>
            <person name="Lapidus A."/>
            <person name="Metcalf W.W."/>
            <person name="Saunders E."/>
            <person name="Tapia R."/>
            <person name="Sowers K.R."/>
        </authorList>
    </citation>
    <scope>NUCLEOTIDE SEQUENCE [LARGE SCALE GENOMIC DNA]</scope>
    <source>
        <strain>Fusaro / DSM 804</strain>
    </source>
</reference>
<feature type="chain" id="PRO_0000212240" description="2,3-bisphosphoglycerate-independent phosphoglycerate mutase 1">
    <location>
        <begin position="1"/>
        <end position="517"/>
    </location>
</feature>
<feature type="active site" description="Phosphoserine intermediate" evidence="1">
    <location>
        <position position="67"/>
    </location>
</feature>
<feature type="binding site" evidence="1">
    <location>
        <position position="17"/>
    </location>
    <ligand>
        <name>Mn(2+)</name>
        <dbReference type="ChEBI" id="CHEBI:29035"/>
        <label>2</label>
    </ligand>
</feature>
<feature type="binding site" evidence="1">
    <location>
        <position position="67"/>
    </location>
    <ligand>
        <name>Mn(2+)</name>
        <dbReference type="ChEBI" id="CHEBI:29035"/>
        <label>2</label>
    </ligand>
</feature>
<feature type="binding site" evidence="1">
    <location>
        <position position="128"/>
    </location>
    <ligand>
        <name>substrate</name>
    </ligand>
</feature>
<feature type="binding site" evidence="1">
    <location>
        <begin position="158"/>
        <end position="159"/>
    </location>
    <ligand>
        <name>substrate</name>
    </ligand>
</feature>
<feature type="binding site" evidence="1">
    <location>
        <position position="190"/>
    </location>
    <ligand>
        <name>substrate</name>
    </ligand>
</feature>
<feature type="binding site" evidence="1">
    <location>
        <position position="196"/>
    </location>
    <ligand>
        <name>substrate</name>
    </ligand>
</feature>
<feature type="binding site" evidence="1">
    <location>
        <begin position="267"/>
        <end position="270"/>
    </location>
    <ligand>
        <name>substrate</name>
    </ligand>
</feature>
<feature type="binding site" evidence="1">
    <location>
        <position position="340"/>
    </location>
    <ligand>
        <name>substrate</name>
    </ligand>
</feature>
<feature type="binding site" evidence="1">
    <location>
        <position position="407"/>
    </location>
    <ligand>
        <name>Mn(2+)</name>
        <dbReference type="ChEBI" id="CHEBI:29035"/>
        <label>1</label>
    </ligand>
</feature>
<feature type="binding site" evidence="1">
    <location>
        <position position="411"/>
    </location>
    <ligand>
        <name>Mn(2+)</name>
        <dbReference type="ChEBI" id="CHEBI:29035"/>
        <label>1</label>
    </ligand>
</feature>
<feature type="binding site" evidence="1">
    <location>
        <position position="448"/>
    </location>
    <ligand>
        <name>Mn(2+)</name>
        <dbReference type="ChEBI" id="CHEBI:29035"/>
        <label>2</label>
    </ligand>
</feature>
<feature type="binding site" evidence="1">
    <location>
        <position position="449"/>
    </location>
    <ligand>
        <name>Mn(2+)</name>
        <dbReference type="ChEBI" id="CHEBI:29035"/>
        <label>2</label>
    </ligand>
</feature>
<feature type="binding site" evidence="1">
    <location>
        <position position="467"/>
    </location>
    <ligand>
        <name>Mn(2+)</name>
        <dbReference type="ChEBI" id="CHEBI:29035"/>
        <label>1</label>
    </ligand>
</feature>
<sequence length="517" mass="57532">MLHMTQAKKPLMLIILDGWGYREAREGNAILAARTPNLDHLIEEYPWCFLEASGEAVGLPEGQMGNSEVGHLNIGAGRIVYQDLTRINFSIRKGDFFKNPAFLGAISNAKANDSSLHLMGLVSYGGVHSYMAHIHALIKLAQQEGVKKVYIHAFLDGRDVPPKAALKDIEELDAFCKENGNAKIATISGRYYAMDRDKRWDRTKLAYDALTMGVAPYKTPDAETAVSEAYKRGETDEFVKPTVITDSEGKPEAVIKDNDSIIFFNFRPDRARQLTWAFVNKDFENFPREKHPKVYYVCMAQYDETLDLPIAFPPEELENVLGEVLSKQGLAQLRIAETEKYAHVTFFLNGGQEKCYEGEDRCLIPSPKIATYDLKPEMSAYEVTEEVIGRIRSGKYDVIVLNFANMDMVGHTGIFEAAVKAVEAVDSCVGKIATVLKEVGGVAIITADHGNAEQMENPTTEEPHTAHTSNPVKCIYFGNDEVKGLKNGKLCDLAPTLLELLKIRKPEEMTGESLIIK</sequence>
<name>GPMI1_METBF</name>